<dbReference type="EC" id="2.1.1.-" evidence="1"/>
<dbReference type="EMBL" id="AAFI02000073">
    <property type="protein sequence ID" value="EAL64936.1"/>
    <property type="molecule type" value="Genomic_DNA"/>
</dbReference>
<dbReference type="RefSeq" id="XP_639947.1">
    <property type="nucleotide sequence ID" value="XM_634855.1"/>
</dbReference>
<dbReference type="SMR" id="Q54NX0"/>
<dbReference type="FunCoup" id="Q54NX0">
    <property type="interactions" value="1006"/>
</dbReference>
<dbReference type="STRING" id="44689.Q54NX0"/>
<dbReference type="PaxDb" id="44689-DDB0238604"/>
<dbReference type="EnsemblProtists" id="EAL64936">
    <property type="protein sequence ID" value="EAL64936"/>
    <property type="gene ID" value="DDB_G0284945"/>
</dbReference>
<dbReference type="GeneID" id="8624859"/>
<dbReference type="KEGG" id="ddi:DDB_G0284945"/>
<dbReference type="dictyBase" id="DDB_G0284945">
    <property type="gene designation" value="fsjC"/>
</dbReference>
<dbReference type="VEuPathDB" id="AmoebaDB:DDB_G0284945"/>
<dbReference type="eggNOG" id="KOG1098">
    <property type="taxonomic scope" value="Eukaryota"/>
</dbReference>
<dbReference type="HOGENOM" id="CLU_009422_8_1_1"/>
<dbReference type="InParanoid" id="Q54NX0"/>
<dbReference type="OMA" id="QRKDKYY"/>
<dbReference type="PhylomeDB" id="Q54NX0"/>
<dbReference type="PRO" id="PR:Q54NX0"/>
<dbReference type="Proteomes" id="UP000002195">
    <property type="component" value="Chromosome 4"/>
</dbReference>
<dbReference type="GO" id="GO:0005730">
    <property type="term" value="C:nucleolus"/>
    <property type="evidence" value="ECO:0000318"/>
    <property type="project" value="GO_Central"/>
</dbReference>
<dbReference type="GO" id="GO:0005634">
    <property type="term" value="C:nucleus"/>
    <property type="evidence" value="ECO:0000250"/>
    <property type="project" value="dictyBase"/>
</dbReference>
<dbReference type="GO" id="GO:0030687">
    <property type="term" value="C:preribosome, large subunit precursor"/>
    <property type="evidence" value="ECO:0000318"/>
    <property type="project" value="GO_Central"/>
</dbReference>
<dbReference type="GO" id="GO:0016435">
    <property type="term" value="F:rRNA (guanine) methyltransferase activity"/>
    <property type="evidence" value="ECO:0000318"/>
    <property type="project" value="GO_Central"/>
</dbReference>
<dbReference type="GO" id="GO:0008650">
    <property type="term" value="F:rRNA (uridine-2'-O-)-methyltransferase activity"/>
    <property type="evidence" value="ECO:0000318"/>
    <property type="project" value="GO_Central"/>
</dbReference>
<dbReference type="GO" id="GO:0008649">
    <property type="term" value="F:rRNA methyltransferase activity"/>
    <property type="evidence" value="ECO:0000250"/>
    <property type="project" value="dictyBase"/>
</dbReference>
<dbReference type="GO" id="GO:0000466">
    <property type="term" value="P:maturation of 5.8S rRNA from tricistronic rRNA transcript (SSU-rRNA, 5.8S rRNA, LSU-rRNA)"/>
    <property type="evidence" value="ECO:0000318"/>
    <property type="project" value="GO_Central"/>
</dbReference>
<dbReference type="GO" id="GO:0000463">
    <property type="term" value="P:maturation of LSU-rRNA from tricistronic rRNA transcript (SSU-rRNA, 5.8S rRNA, LSU-rRNA)"/>
    <property type="evidence" value="ECO:0000318"/>
    <property type="project" value="GO_Central"/>
</dbReference>
<dbReference type="GO" id="GO:0031167">
    <property type="term" value="P:rRNA methylation"/>
    <property type="evidence" value="ECO:0000318"/>
    <property type="project" value="GO_Central"/>
</dbReference>
<dbReference type="FunFam" id="3.40.50.150:FF:000004">
    <property type="entry name" value="AdoMet-dependent rRNA methyltransferase SPB1"/>
    <property type="match status" value="1"/>
</dbReference>
<dbReference type="Gene3D" id="3.40.50.150">
    <property type="entry name" value="Vaccinia Virus protein VP39"/>
    <property type="match status" value="1"/>
</dbReference>
<dbReference type="HAMAP" id="MF_01547">
    <property type="entry name" value="RNA_methyltr_E"/>
    <property type="match status" value="1"/>
</dbReference>
<dbReference type="HAMAP" id="MF_03163">
    <property type="entry name" value="RNA_methyltr_E_SPB1"/>
    <property type="match status" value="1"/>
</dbReference>
<dbReference type="InterPro" id="IPR050082">
    <property type="entry name" value="RNA_methyltr_RlmE"/>
</dbReference>
<dbReference type="InterPro" id="IPR002877">
    <property type="entry name" value="RNA_MeTrfase_FtsJ_dom"/>
</dbReference>
<dbReference type="InterPro" id="IPR015507">
    <property type="entry name" value="rRNA-MeTfrase_E"/>
</dbReference>
<dbReference type="InterPro" id="IPR012920">
    <property type="entry name" value="rRNA_MeTfrase_SPB1-like_C"/>
</dbReference>
<dbReference type="InterPro" id="IPR024576">
    <property type="entry name" value="rRNA_MeTfrase_Spb1_DUF3381"/>
</dbReference>
<dbReference type="InterPro" id="IPR029063">
    <property type="entry name" value="SAM-dependent_MTases_sf"/>
</dbReference>
<dbReference type="InterPro" id="IPR028589">
    <property type="entry name" value="SPB1-like"/>
</dbReference>
<dbReference type="PANTHER" id="PTHR10920:SF13">
    <property type="entry name" value="PRE-RRNA 2'-O-RIBOSE RNA METHYLTRANSFERASE FTSJ3"/>
    <property type="match status" value="1"/>
</dbReference>
<dbReference type="PANTHER" id="PTHR10920">
    <property type="entry name" value="RIBOSOMAL RNA METHYLTRANSFERASE"/>
    <property type="match status" value="1"/>
</dbReference>
<dbReference type="Pfam" id="PF11861">
    <property type="entry name" value="DUF3381"/>
    <property type="match status" value="1"/>
</dbReference>
<dbReference type="Pfam" id="PF01728">
    <property type="entry name" value="FtsJ"/>
    <property type="match status" value="1"/>
</dbReference>
<dbReference type="Pfam" id="PF07780">
    <property type="entry name" value="Spb1_C"/>
    <property type="match status" value="1"/>
</dbReference>
<dbReference type="SUPFAM" id="SSF53335">
    <property type="entry name" value="S-adenosyl-L-methionine-dependent methyltransferases"/>
    <property type="match status" value="1"/>
</dbReference>
<keyword id="KW-0175">Coiled coil</keyword>
<keyword id="KW-0489">Methyltransferase</keyword>
<keyword id="KW-0539">Nucleus</keyword>
<keyword id="KW-1185">Reference proteome</keyword>
<keyword id="KW-0690">Ribosome biogenesis</keyword>
<keyword id="KW-0698">rRNA processing</keyword>
<keyword id="KW-0949">S-adenosyl-L-methionine</keyword>
<keyword id="KW-0808">Transferase</keyword>
<comment type="function">
    <text evidence="1">RNA 2'-O-methyltransferase involved in the maturation of rRNA and in the biogenesis of ribosomal subunits.</text>
</comment>
<comment type="catalytic activity">
    <reaction evidence="1">
        <text>a ribonucleotide in rRNA + S-adenosyl-L-methionine = a 2'-O-methylribonucleotide in rRNA + S-adenosyl-L-homocysteine + H(+)</text>
        <dbReference type="Rhea" id="RHEA:48628"/>
        <dbReference type="Rhea" id="RHEA-COMP:12164"/>
        <dbReference type="Rhea" id="RHEA-COMP:12165"/>
        <dbReference type="ChEBI" id="CHEBI:15378"/>
        <dbReference type="ChEBI" id="CHEBI:57856"/>
        <dbReference type="ChEBI" id="CHEBI:59789"/>
        <dbReference type="ChEBI" id="CHEBI:90675"/>
        <dbReference type="ChEBI" id="CHEBI:90676"/>
    </reaction>
</comment>
<comment type="subcellular location">
    <subcellularLocation>
        <location evidence="1">Nucleus</location>
        <location evidence="1">Nucleolus</location>
    </subcellularLocation>
</comment>
<comment type="similarity">
    <text evidence="1">Belongs to the class I-like SAM-binding methyltransferase superfamily. RNA methyltransferase RlmE family. SPB1 subfamily.</text>
</comment>
<sequence>MGQKKKKLAKGRLDKFYYMAKEQGYRSRAAFKLIQLNKKYNFLGTAKACLDLCAAPGGWMQVASKYMPVQSLIVGVDLVPIRQVRNCIGLTEDITTQKCRTEIKKALKTWKVDVCLHDGAPNMGTSWVQDAYQQAELTLHALKLATEFLTTGGWFVTKVFRGSDYNSLIWVFNKLFKKVESTKPPSSRNASAEIFVVCQGFLNPKRIDPKLLDPKFVFKEIQEVKKVDVLSEKKKVNRAGYEDGVTVLYKKGFISDFVNSNEHLQDLANFNAFEFDEAAKIFEQHELTTPEIKELVKDLKVLNKNDFQKIIKWKKAMAAYKEKLDNPDEEETEKPEEKKELTAEEMEENLQEEMKEYLALVEKKKRKEKKRQNELKRKHQRKIELTMHIPGDKIEETTDGDLYSMKGKDEFDEDIVADHSDISSDEFDSDDSDDDDDDDNNGDSKLIDDDEYLEQQLDEQYKLYQQRIRKKAAKLDDVKVKKDKIGQDGYNEDDEEFVEEQEESNPLLVGNKRKEPDAQAVSSLFFDNELFGGVEYRNPGDSESEPEQDGDDDQDDENNKPIDISKLKKQKPQAAQPITKKQKTTNSAEFGKQKSKYQKNPTLDDKDDQDDDDDKGNSIKGFEEVPVQEEVEYESDSDEDIDDKIKTKALGEFLIRKKSRQDLIDDSFNKYAFNDTGLPNWFTDDENRHNKAQTPLTKEMVDEIRRKIKEIDDRPIKKIAEAKARKKYRLGKKMEKTRDKASSIVDNPEMSNREKSKAIEKLYSGTDKKNMKPKKIIMIAKKSKTAGGGTGKYKIVDKRMKKDLRAQKNKLKTVGRSKDSSKKSKPSGGKNKK</sequence>
<accession>Q54NX0</accession>
<protein>
    <recommendedName>
        <fullName evidence="1">pre-rRNA 2'-O-ribose RNA methyltransferase</fullName>
        <ecNumber evidence="1">2.1.1.-</ecNumber>
    </recommendedName>
</protein>
<evidence type="ECO:0000255" key="1">
    <source>
        <dbReference type="HAMAP-Rule" id="MF_03163"/>
    </source>
</evidence>
<evidence type="ECO:0000256" key="2">
    <source>
        <dbReference type="SAM" id="MobiDB-lite"/>
    </source>
</evidence>
<organism>
    <name type="scientific">Dictyostelium discoideum</name>
    <name type="common">Social amoeba</name>
    <dbReference type="NCBI Taxonomy" id="44689"/>
    <lineage>
        <taxon>Eukaryota</taxon>
        <taxon>Amoebozoa</taxon>
        <taxon>Evosea</taxon>
        <taxon>Eumycetozoa</taxon>
        <taxon>Dictyostelia</taxon>
        <taxon>Dictyosteliales</taxon>
        <taxon>Dictyosteliaceae</taxon>
        <taxon>Dictyostelium</taxon>
    </lineage>
</organism>
<reference key="1">
    <citation type="journal article" date="2005" name="Nature">
        <title>The genome of the social amoeba Dictyostelium discoideum.</title>
        <authorList>
            <person name="Eichinger L."/>
            <person name="Pachebat J.A."/>
            <person name="Gloeckner G."/>
            <person name="Rajandream M.A."/>
            <person name="Sucgang R."/>
            <person name="Berriman M."/>
            <person name="Song J."/>
            <person name="Olsen R."/>
            <person name="Szafranski K."/>
            <person name="Xu Q."/>
            <person name="Tunggal B."/>
            <person name="Kummerfeld S."/>
            <person name="Madera M."/>
            <person name="Konfortov B.A."/>
            <person name="Rivero F."/>
            <person name="Bankier A.T."/>
            <person name="Lehmann R."/>
            <person name="Hamlin N."/>
            <person name="Davies R."/>
            <person name="Gaudet P."/>
            <person name="Fey P."/>
            <person name="Pilcher K."/>
            <person name="Chen G."/>
            <person name="Saunders D."/>
            <person name="Sodergren E.J."/>
            <person name="Davis P."/>
            <person name="Kerhornou A."/>
            <person name="Nie X."/>
            <person name="Hall N."/>
            <person name="Anjard C."/>
            <person name="Hemphill L."/>
            <person name="Bason N."/>
            <person name="Farbrother P."/>
            <person name="Desany B."/>
            <person name="Just E."/>
            <person name="Morio T."/>
            <person name="Rost R."/>
            <person name="Churcher C.M."/>
            <person name="Cooper J."/>
            <person name="Haydock S."/>
            <person name="van Driessche N."/>
            <person name="Cronin A."/>
            <person name="Goodhead I."/>
            <person name="Muzny D.M."/>
            <person name="Mourier T."/>
            <person name="Pain A."/>
            <person name="Lu M."/>
            <person name="Harper D."/>
            <person name="Lindsay R."/>
            <person name="Hauser H."/>
            <person name="James K.D."/>
            <person name="Quiles M."/>
            <person name="Madan Babu M."/>
            <person name="Saito T."/>
            <person name="Buchrieser C."/>
            <person name="Wardroper A."/>
            <person name="Felder M."/>
            <person name="Thangavelu M."/>
            <person name="Johnson D."/>
            <person name="Knights A."/>
            <person name="Loulseged H."/>
            <person name="Mungall K.L."/>
            <person name="Oliver K."/>
            <person name="Price C."/>
            <person name="Quail M.A."/>
            <person name="Urushihara H."/>
            <person name="Hernandez J."/>
            <person name="Rabbinowitsch E."/>
            <person name="Steffen D."/>
            <person name="Sanders M."/>
            <person name="Ma J."/>
            <person name="Kohara Y."/>
            <person name="Sharp S."/>
            <person name="Simmonds M.N."/>
            <person name="Spiegler S."/>
            <person name="Tivey A."/>
            <person name="Sugano S."/>
            <person name="White B."/>
            <person name="Walker D."/>
            <person name="Woodward J.R."/>
            <person name="Winckler T."/>
            <person name="Tanaka Y."/>
            <person name="Shaulsky G."/>
            <person name="Schleicher M."/>
            <person name="Weinstock G.M."/>
            <person name="Rosenthal A."/>
            <person name="Cox E.C."/>
            <person name="Chisholm R.L."/>
            <person name="Gibbs R.A."/>
            <person name="Loomis W.F."/>
            <person name="Platzer M."/>
            <person name="Kay R.R."/>
            <person name="Williams J.G."/>
            <person name="Dear P.H."/>
            <person name="Noegel A.A."/>
            <person name="Barrell B.G."/>
            <person name="Kuspa A."/>
        </authorList>
    </citation>
    <scope>NUCLEOTIDE SEQUENCE [LARGE SCALE GENOMIC DNA]</scope>
    <source>
        <strain>AX4</strain>
    </source>
</reference>
<gene>
    <name type="primary">fsjC</name>
    <name type="synonym">ftsj3</name>
    <name type="ORF">DDB_G0284945</name>
</gene>
<proteinExistence type="inferred from homology"/>
<name>SPB1_DICDI</name>
<feature type="chain" id="PRO_0000328496" description="pre-rRNA 2'-O-ribose RNA methyltransferase">
    <location>
        <begin position="1"/>
        <end position="833"/>
    </location>
</feature>
<feature type="region of interest" description="Disordered" evidence="2">
    <location>
        <begin position="323"/>
        <end position="349"/>
    </location>
</feature>
<feature type="region of interest" description="Disordered" evidence="2">
    <location>
        <begin position="363"/>
        <end position="453"/>
    </location>
</feature>
<feature type="region of interest" description="Disordered" evidence="2">
    <location>
        <begin position="475"/>
        <end position="640"/>
    </location>
</feature>
<feature type="region of interest" description="Disordered" evidence="2">
    <location>
        <begin position="730"/>
        <end position="767"/>
    </location>
</feature>
<feature type="region of interest" description="Disordered" evidence="2">
    <location>
        <begin position="779"/>
        <end position="833"/>
    </location>
</feature>
<feature type="coiled-coil region" evidence="1">
    <location>
        <begin position="336"/>
        <end position="386"/>
    </location>
</feature>
<feature type="coiled-coil region" evidence="1">
    <location>
        <begin position="455"/>
        <end position="485"/>
    </location>
</feature>
<feature type="compositionally biased region" description="Basic residues" evidence="2">
    <location>
        <begin position="363"/>
        <end position="381"/>
    </location>
</feature>
<feature type="compositionally biased region" description="Basic and acidic residues" evidence="2">
    <location>
        <begin position="382"/>
        <end position="396"/>
    </location>
</feature>
<feature type="compositionally biased region" description="Acidic residues" evidence="2">
    <location>
        <begin position="423"/>
        <end position="441"/>
    </location>
</feature>
<feature type="compositionally biased region" description="Basic and acidic residues" evidence="2">
    <location>
        <begin position="475"/>
        <end position="486"/>
    </location>
</feature>
<feature type="compositionally biased region" description="Acidic residues" evidence="2">
    <location>
        <begin position="490"/>
        <end position="503"/>
    </location>
</feature>
<feature type="compositionally biased region" description="Acidic residues" evidence="2">
    <location>
        <begin position="542"/>
        <end position="556"/>
    </location>
</feature>
<feature type="compositionally biased region" description="Basic and acidic residues" evidence="2">
    <location>
        <begin position="557"/>
        <end position="566"/>
    </location>
</feature>
<feature type="compositionally biased region" description="Acidic residues" evidence="2">
    <location>
        <begin position="605"/>
        <end position="614"/>
    </location>
</feature>
<feature type="compositionally biased region" description="Acidic residues" evidence="2">
    <location>
        <begin position="626"/>
        <end position="640"/>
    </location>
</feature>
<feature type="compositionally biased region" description="Basic and acidic residues" evidence="2">
    <location>
        <begin position="732"/>
        <end position="741"/>
    </location>
</feature>
<feature type="compositionally biased region" description="Basic and acidic residues" evidence="2">
    <location>
        <begin position="751"/>
        <end position="767"/>
    </location>
</feature>
<feature type="compositionally biased region" description="Basic and acidic residues" evidence="2">
    <location>
        <begin position="794"/>
        <end position="806"/>
    </location>
</feature>
<feature type="active site" description="Proton acceptor" evidence="1">
    <location>
        <position position="158"/>
    </location>
</feature>
<feature type="binding site" evidence="1">
    <location>
        <position position="57"/>
    </location>
    <ligand>
        <name>S-adenosyl-L-methionine</name>
        <dbReference type="ChEBI" id="CHEBI:59789"/>
    </ligand>
</feature>
<feature type="binding site" evidence="1">
    <location>
        <position position="59"/>
    </location>
    <ligand>
        <name>S-adenosyl-L-methionine</name>
        <dbReference type="ChEBI" id="CHEBI:59789"/>
    </ligand>
</feature>
<feature type="binding site" evidence="1">
    <location>
        <position position="77"/>
    </location>
    <ligand>
        <name>S-adenosyl-L-methionine</name>
        <dbReference type="ChEBI" id="CHEBI:59789"/>
    </ligand>
</feature>
<feature type="binding site" evidence="1">
    <location>
        <position position="93"/>
    </location>
    <ligand>
        <name>S-adenosyl-L-methionine</name>
        <dbReference type="ChEBI" id="CHEBI:59789"/>
    </ligand>
</feature>
<feature type="binding site" evidence="1">
    <location>
        <position position="118"/>
    </location>
    <ligand>
        <name>S-adenosyl-L-methionine</name>
        <dbReference type="ChEBI" id="CHEBI:59789"/>
    </ligand>
</feature>